<feature type="chain" id="PRO_0000200873" description="Probable metalloprotease y4jG">
    <location>
        <begin position="1"/>
        <end position="162"/>
    </location>
</feature>
<feature type="domain" description="MPN" evidence="1">
    <location>
        <begin position="9"/>
        <end position="147"/>
    </location>
</feature>
<feature type="binding site" evidence="1">
    <location>
        <position position="94"/>
    </location>
    <ligand>
        <name>Zn(2+)</name>
        <dbReference type="ChEBI" id="CHEBI:29105"/>
        <note>catalytic</note>
    </ligand>
</feature>
<feature type="binding site" evidence="1">
    <location>
        <position position="96"/>
    </location>
    <ligand>
        <name>Zn(2+)</name>
        <dbReference type="ChEBI" id="CHEBI:29105"/>
        <note>catalytic</note>
    </ligand>
</feature>
<feature type="binding site" evidence="1">
    <location>
        <position position="107"/>
    </location>
    <ligand>
        <name>Zn(2+)</name>
        <dbReference type="ChEBI" id="CHEBI:29105"/>
        <note>catalytic</note>
    </ligand>
</feature>
<geneLocation type="plasmid">
    <name>sym pNGR234a</name>
</geneLocation>
<accession>P55507</accession>
<sequence length="162" mass="17910">MSALEDVRTVALPRDCVSTVQAHLRSVGQQGHEGMALWVGVQQDQHFVIAETVIPAQRHIRTSDGVCVMVPAEELHRLNVWLYKRGLTLLAQIHSHPGRAYHSTTDDAYAVATTIGCLSLVVPNFAREPFDFAHVAAYRLDAKANWNEVPSAVLTRMITITS</sequence>
<keyword id="KW-0378">Hydrolase</keyword>
<keyword id="KW-0479">Metal-binding</keyword>
<keyword id="KW-0482">Metalloprotease</keyword>
<keyword id="KW-0614">Plasmid</keyword>
<keyword id="KW-0645">Protease</keyword>
<keyword id="KW-1185">Reference proteome</keyword>
<keyword id="KW-0862">Zinc</keyword>
<dbReference type="EMBL" id="U00090">
    <property type="protein sequence ID" value="AAB91719.1"/>
    <property type="molecule type" value="Genomic_DNA"/>
</dbReference>
<dbReference type="RefSeq" id="NP_443917.1">
    <property type="nucleotide sequence ID" value="NC_000914.2"/>
</dbReference>
<dbReference type="SMR" id="P55507"/>
<dbReference type="KEGG" id="rhi:NGR_a03080"/>
<dbReference type="eggNOG" id="ENOG50337AS">
    <property type="taxonomic scope" value="Bacteria"/>
</dbReference>
<dbReference type="HOGENOM" id="CLU_112902_0_0_5"/>
<dbReference type="OrthoDB" id="9804316at2"/>
<dbReference type="Proteomes" id="UP000001054">
    <property type="component" value="Plasmid pNGR234a"/>
</dbReference>
<dbReference type="GO" id="GO:0046872">
    <property type="term" value="F:metal ion binding"/>
    <property type="evidence" value="ECO:0007669"/>
    <property type="project" value="UniProtKB-KW"/>
</dbReference>
<dbReference type="GO" id="GO:0008237">
    <property type="term" value="F:metallopeptidase activity"/>
    <property type="evidence" value="ECO:0007669"/>
    <property type="project" value="UniProtKB-KW"/>
</dbReference>
<dbReference type="GO" id="GO:0006508">
    <property type="term" value="P:proteolysis"/>
    <property type="evidence" value="ECO:0007669"/>
    <property type="project" value="UniProtKB-KW"/>
</dbReference>
<dbReference type="Gene3D" id="3.40.140.10">
    <property type="entry name" value="Cytidine Deaminase, domain 2"/>
    <property type="match status" value="1"/>
</dbReference>
<dbReference type="InterPro" id="IPR028090">
    <property type="entry name" value="JAB_dom_prok"/>
</dbReference>
<dbReference type="InterPro" id="IPR037518">
    <property type="entry name" value="MPN"/>
</dbReference>
<dbReference type="Pfam" id="PF14464">
    <property type="entry name" value="Prok-JAB"/>
    <property type="match status" value="1"/>
</dbReference>
<dbReference type="SUPFAM" id="SSF102712">
    <property type="entry name" value="JAB1/MPN domain"/>
    <property type="match status" value="1"/>
</dbReference>
<dbReference type="PROSITE" id="PS50249">
    <property type="entry name" value="MPN"/>
    <property type="match status" value="1"/>
</dbReference>
<gene>
    <name type="ordered locus">NGR_a03080</name>
    <name type="ORF">y4jG</name>
</gene>
<name>Y4JG_SINFN</name>
<evidence type="ECO:0000255" key="1">
    <source>
        <dbReference type="PROSITE-ProRule" id="PRU01182"/>
    </source>
</evidence>
<evidence type="ECO:0000305" key="2"/>
<reference key="1">
    <citation type="journal article" date="1997" name="Nature">
        <title>Molecular basis of symbiosis between Rhizobium and legumes.</title>
        <authorList>
            <person name="Freiberg C.A."/>
            <person name="Fellay R."/>
            <person name="Bairoch A."/>
            <person name="Broughton W.J."/>
            <person name="Rosenthal A."/>
            <person name="Perret X."/>
        </authorList>
    </citation>
    <scope>NUCLEOTIDE SEQUENCE [LARGE SCALE GENOMIC DNA]</scope>
    <source>
        <strain>NBRC 101917 / NGR234</strain>
    </source>
</reference>
<reference key="2">
    <citation type="journal article" date="2009" name="Appl. Environ. Microbiol.">
        <title>Rhizobium sp. strain NGR234 possesses a remarkable number of secretion systems.</title>
        <authorList>
            <person name="Schmeisser C."/>
            <person name="Liesegang H."/>
            <person name="Krysciak D."/>
            <person name="Bakkou N."/>
            <person name="Le Quere A."/>
            <person name="Wollherr A."/>
            <person name="Heinemeyer I."/>
            <person name="Morgenstern B."/>
            <person name="Pommerening-Roeser A."/>
            <person name="Flores M."/>
            <person name="Palacios R."/>
            <person name="Brenner S."/>
            <person name="Gottschalk G."/>
            <person name="Schmitz R.A."/>
            <person name="Broughton W.J."/>
            <person name="Perret X."/>
            <person name="Strittmatter A.W."/>
            <person name="Streit W.R."/>
        </authorList>
    </citation>
    <scope>NUCLEOTIDE SEQUENCE [LARGE SCALE GENOMIC DNA]</scope>
    <source>
        <strain>NBRC 101917 / NGR234</strain>
    </source>
</reference>
<proteinExistence type="inferred from homology"/>
<comment type="similarity">
    <text evidence="2">Belongs to the peptidase M67B family.</text>
</comment>
<organism>
    <name type="scientific">Sinorhizobium fredii (strain NBRC 101917 / NGR234)</name>
    <dbReference type="NCBI Taxonomy" id="394"/>
    <lineage>
        <taxon>Bacteria</taxon>
        <taxon>Pseudomonadati</taxon>
        <taxon>Pseudomonadota</taxon>
        <taxon>Alphaproteobacteria</taxon>
        <taxon>Hyphomicrobiales</taxon>
        <taxon>Rhizobiaceae</taxon>
        <taxon>Sinorhizobium/Ensifer group</taxon>
        <taxon>Sinorhizobium</taxon>
    </lineage>
</organism>
<protein>
    <recommendedName>
        <fullName>Probable metalloprotease y4jG</fullName>
    </recommendedName>
</protein>